<name>Y1284_BRUAB</name>
<evidence type="ECO:0000255" key="1">
    <source>
        <dbReference type="PROSITE-ProRule" id="PRU01182"/>
    </source>
</evidence>
<evidence type="ECO:0000256" key="2">
    <source>
        <dbReference type="SAM" id="MobiDB-lite"/>
    </source>
</evidence>
<evidence type="ECO:0000305" key="3"/>
<gene>
    <name type="ordered locus">BruAb1_1284</name>
</gene>
<dbReference type="EMBL" id="AE017223">
    <property type="protein sequence ID" value="AAX74621.1"/>
    <property type="molecule type" value="Genomic_DNA"/>
</dbReference>
<dbReference type="SMR" id="Q57CL3"/>
<dbReference type="EnsemblBacteria" id="AAX74621">
    <property type="protein sequence ID" value="AAX74621"/>
    <property type="gene ID" value="BruAb1_1284"/>
</dbReference>
<dbReference type="KEGG" id="bmb:BruAb1_1284"/>
<dbReference type="HOGENOM" id="CLU_073529_0_0_5"/>
<dbReference type="Proteomes" id="UP000000540">
    <property type="component" value="Chromosome I"/>
</dbReference>
<dbReference type="GO" id="GO:0046872">
    <property type="term" value="F:metal ion binding"/>
    <property type="evidence" value="ECO:0007669"/>
    <property type="project" value="UniProtKB-KW"/>
</dbReference>
<dbReference type="GO" id="GO:0008237">
    <property type="term" value="F:metallopeptidase activity"/>
    <property type="evidence" value="ECO:0007669"/>
    <property type="project" value="UniProtKB-KW"/>
</dbReference>
<dbReference type="GO" id="GO:0006508">
    <property type="term" value="P:proteolysis"/>
    <property type="evidence" value="ECO:0007669"/>
    <property type="project" value="UniProtKB-KW"/>
</dbReference>
<dbReference type="CDD" id="cd08071">
    <property type="entry name" value="MPN_DUF2466"/>
    <property type="match status" value="1"/>
</dbReference>
<dbReference type="Gene3D" id="1.10.150.20">
    <property type="entry name" value="5' to 3' exonuclease, C-terminal subdomain"/>
    <property type="match status" value="1"/>
</dbReference>
<dbReference type="Gene3D" id="3.40.140.10">
    <property type="entry name" value="Cytidine Deaminase, domain 2"/>
    <property type="match status" value="1"/>
</dbReference>
<dbReference type="InterPro" id="IPR037518">
    <property type="entry name" value="MPN"/>
</dbReference>
<dbReference type="InterPro" id="IPR025657">
    <property type="entry name" value="RadC_JAB"/>
</dbReference>
<dbReference type="InterPro" id="IPR010994">
    <property type="entry name" value="RuvA_2-like"/>
</dbReference>
<dbReference type="InterPro" id="IPR001405">
    <property type="entry name" value="UPF0758"/>
</dbReference>
<dbReference type="InterPro" id="IPR020891">
    <property type="entry name" value="UPF0758_CS"/>
</dbReference>
<dbReference type="NCBIfam" id="NF000642">
    <property type="entry name" value="PRK00024.1"/>
    <property type="match status" value="1"/>
</dbReference>
<dbReference type="NCBIfam" id="TIGR00608">
    <property type="entry name" value="radc"/>
    <property type="match status" value="1"/>
</dbReference>
<dbReference type="PANTHER" id="PTHR30471">
    <property type="entry name" value="DNA REPAIR PROTEIN RADC"/>
    <property type="match status" value="1"/>
</dbReference>
<dbReference type="PANTHER" id="PTHR30471:SF3">
    <property type="entry name" value="UPF0758 PROTEIN YEES-RELATED"/>
    <property type="match status" value="1"/>
</dbReference>
<dbReference type="Pfam" id="PF04002">
    <property type="entry name" value="RadC"/>
    <property type="match status" value="1"/>
</dbReference>
<dbReference type="SUPFAM" id="SSF102712">
    <property type="entry name" value="JAB1/MPN domain"/>
    <property type="match status" value="1"/>
</dbReference>
<dbReference type="SUPFAM" id="SSF47781">
    <property type="entry name" value="RuvA domain 2-like"/>
    <property type="match status" value="1"/>
</dbReference>
<dbReference type="PROSITE" id="PS50249">
    <property type="entry name" value="MPN"/>
    <property type="match status" value="1"/>
</dbReference>
<dbReference type="PROSITE" id="PS01302">
    <property type="entry name" value="UPF0758"/>
    <property type="match status" value="1"/>
</dbReference>
<feature type="chain" id="PRO_0000190687" description="UPF0758 protein BruAb1_1284">
    <location>
        <begin position="1"/>
        <end position="249"/>
    </location>
</feature>
<feature type="domain" description="MPN" evidence="1">
    <location>
        <begin position="127"/>
        <end position="249"/>
    </location>
</feature>
<feature type="region of interest" description="Disordered" evidence="2">
    <location>
        <begin position="1"/>
        <end position="34"/>
    </location>
</feature>
<feature type="short sequence motif" description="JAMM motif" evidence="1">
    <location>
        <begin position="198"/>
        <end position="211"/>
    </location>
</feature>
<feature type="compositionally biased region" description="Basic and acidic residues" evidence="2">
    <location>
        <begin position="24"/>
        <end position="34"/>
    </location>
</feature>
<feature type="binding site" evidence="1">
    <location>
        <position position="198"/>
    </location>
    <ligand>
        <name>Zn(2+)</name>
        <dbReference type="ChEBI" id="CHEBI:29105"/>
        <note>catalytic</note>
    </ligand>
</feature>
<feature type="binding site" evidence="1">
    <location>
        <position position="200"/>
    </location>
    <ligand>
        <name>Zn(2+)</name>
        <dbReference type="ChEBI" id="CHEBI:29105"/>
        <note>catalytic</note>
    </ligand>
</feature>
<feature type="binding site" evidence="1">
    <location>
        <position position="211"/>
    </location>
    <ligand>
        <name>Zn(2+)</name>
        <dbReference type="ChEBI" id="CHEBI:29105"/>
        <note>catalytic</note>
    </ligand>
</feature>
<proteinExistence type="inferred from homology"/>
<sequence length="249" mass="27676">MAKKKDTPGDGEFPGFSDTLQRTPKLEKPHYAGHRDRLKQRFRDAPDALADYELLELLLFRAIRRADTKPIAKALLNRFGSIAEVLAAPENLIAEIPGAGPTVALELKLVEAIAKRSARSTVMEREVLGSWDKVINYCTAAMAFETREQFRILFLDKKNKLIADEVQQTGTVDHTPVYPREVVKRALELSATAIILVHNHPSGDPTPSRADIDMTKQLVNAAKALNITVHDHVIIGKHGHASLRSLRLI</sequence>
<organism>
    <name type="scientific">Brucella abortus biovar 1 (strain 9-941)</name>
    <dbReference type="NCBI Taxonomy" id="262698"/>
    <lineage>
        <taxon>Bacteria</taxon>
        <taxon>Pseudomonadati</taxon>
        <taxon>Pseudomonadota</taxon>
        <taxon>Alphaproteobacteria</taxon>
        <taxon>Hyphomicrobiales</taxon>
        <taxon>Brucellaceae</taxon>
        <taxon>Brucella/Ochrobactrum group</taxon>
        <taxon>Brucella</taxon>
    </lineage>
</organism>
<comment type="similarity">
    <text evidence="3">Belongs to the UPF0758 family.</text>
</comment>
<keyword id="KW-0378">Hydrolase</keyword>
<keyword id="KW-0479">Metal-binding</keyword>
<keyword id="KW-0482">Metalloprotease</keyword>
<keyword id="KW-0645">Protease</keyword>
<keyword id="KW-0862">Zinc</keyword>
<accession>Q57CL3</accession>
<reference key="1">
    <citation type="journal article" date="2005" name="J. Bacteriol.">
        <title>Completion of the genome sequence of Brucella abortus and comparison to the highly similar genomes of Brucella melitensis and Brucella suis.</title>
        <authorList>
            <person name="Halling S.M."/>
            <person name="Peterson-Burch B.D."/>
            <person name="Bricker B.J."/>
            <person name="Zuerner R.L."/>
            <person name="Qing Z."/>
            <person name="Li L.-L."/>
            <person name="Kapur V."/>
            <person name="Alt D.P."/>
            <person name="Olsen S.C."/>
        </authorList>
    </citation>
    <scope>NUCLEOTIDE SEQUENCE [LARGE SCALE GENOMIC DNA]</scope>
    <source>
        <strain>9-941</strain>
    </source>
</reference>
<protein>
    <recommendedName>
        <fullName>UPF0758 protein BruAb1_1284</fullName>
    </recommendedName>
</protein>